<gene>
    <name type="primary">dnlz</name>
    <name type="ORF">zgc:158228</name>
</gene>
<comment type="function">
    <text evidence="1">May function as a co-chaperone towards HSPA9/mortalin which, by itself, is prone to self-aggregation.</text>
</comment>
<comment type="subcellular location">
    <subcellularLocation>
        <location evidence="1">Mitochondrion</location>
    </subcellularLocation>
</comment>
<name>DNLZ_DANRE</name>
<feature type="transit peptide" description="Mitochondrion" evidence="2">
    <location>
        <begin position="1"/>
        <end position="62"/>
    </location>
</feature>
<feature type="chain" id="PRO_0000317169" description="DNL-type zinc finger protein">
    <location>
        <begin position="63"/>
        <end position="183"/>
    </location>
</feature>
<feature type="zinc finger region" description="DNL-type" evidence="3">
    <location>
        <begin position="76"/>
        <end position="173"/>
    </location>
</feature>
<feature type="region of interest" description="Disordered" evidence="4">
    <location>
        <begin position="160"/>
        <end position="183"/>
    </location>
</feature>
<feature type="compositionally biased region" description="Basic and acidic residues" evidence="4">
    <location>
        <begin position="162"/>
        <end position="183"/>
    </location>
</feature>
<feature type="binding site" evidence="3">
    <location>
        <position position="87"/>
    </location>
    <ligand>
        <name>Zn(2+)</name>
        <dbReference type="ChEBI" id="CHEBI:29105"/>
    </ligand>
</feature>
<feature type="binding site" evidence="3">
    <location>
        <position position="90"/>
    </location>
    <ligand>
        <name>Zn(2+)</name>
        <dbReference type="ChEBI" id="CHEBI:29105"/>
    </ligand>
</feature>
<feature type="binding site" evidence="3">
    <location>
        <position position="112"/>
    </location>
    <ligand>
        <name>Zn(2+)</name>
        <dbReference type="ChEBI" id="CHEBI:29105"/>
    </ligand>
</feature>
<feature type="binding site" evidence="3">
    <location>
        <position position="115"/>
    </location>
    <ligand>
        <name>Zn(2+)</name>
        <dbReference type="ChEBI" id="CHEBI:29105"/>
    </ligand>
</feature>
<reference key="1">
    <citation type="submission" date="2006-12" db="EMBL/GenBank/DDBJ databases">
        <authorList>
            <consortium name="NIH - Zebrafish Gene Collection (ZGC) project"/>
        </authorList>
    </citation>
    <scope>NUCLEOTIDE SEQUENCE [LARGE SCALE MRNA]</scope>
    <source>
        <tissue>Kidney</tissue>
    </source>
</reference>
<organism>
    <name type="scientific">Danio rerio</name>
    <name type="common">Zebrafish</name>
    <name type="synonym">Brachydanio rerio</name>
    <dbReference type="NCBI Taxonomy" id="7955"/>
    <lineage>
        <taxon>Eukaryota</taxon>
        <taxon>Metazoa</taxon>
        <taxon>Chordata</taxon>
        <taxon>Craniata</taxon>
        <taxon>Vertebrata</taxon>
        <taxon>Euteleostomi</taxon>
        <taxon>Actinopterygii</taxon>
        <taxon>Neopterygii</taxon>
        <taxon>Teleostei</taxon>
        <taxon>Ostariophysi</taxon>
        <taxon>Cypriniformes</taxon>
        <taxon>Danionidae</taxon>
        <taxon>Danioninae</taxon>
        <taxon>Danio</taxon>
    </lineage>
</organism>
<accession>A1L1P7</accession>
<sequence>MNSRLCYLLFRPRLLRSRGAGVLSVPETQRVTLARVRHEESNSAFTNSTLRSDVGHDTGLGLSFCRSFSTEAIGQLQSTHYHLVYTCKVCSTRSMKKISKLAYHKGVVIVTCPGCKNHHVIADNLKWFSDLEGKRNIEEILAAKGESVRRVEGSEALEIVNEESRNNPDEQKPAHLSDGSDKT</sequence>
<proteinExistence type="evidence at transcript level"/>
<keyword id="KW-0143">Chaperone</keyword>
<keyword id="KW-0479">Metal-binding</keyword>
<keyword id="KW-0496">Mitochondrion</keyword>
<keyword id="KW-1185">Reference proteome</keyword>
<keyword id="KW-0809">Transit peptide</keyword>
<keyword id="KW-0862">Zinc</keyword>
<keyword id="KW-0863">Zinc-finger</keyword>
<protein>
    <recommendedName>
        <fullName>DNL-type zinc finger protein</fullName>
    </recommendedName>
    <alternativeName>
        <fullName>mtHsp70-escort protein</fullName>
    </alternativeName>
</protein>
<dbReference type="EMBL" id="BC129164">
    <property type="protein sequence ID" value="AAI29165.1"/>
    <property type="molecule type" value="mRNA"/>
</dbReference>
<dbReference type="RefSeq" id="NP_001074117.1">
    <property type="nucleotide sequence ID" value="NM_001080648.1"/>
</dbReference>
<dbReference type="SMR" id="A1L1P7"/>
<dbReference type="STRING" id="7955.ENSDARP00000090162"/>
<dbReference type="PaxDb" id="7955-ENSDARP00000090162"/>
<dbReference type="GeneID" id="791166"/>
<dbReference type="KEGG" id="dre:791166"/>
<dbReference type="AGR" id="ZFIN:ZDB-GENE-070112-1482"/>
<dbReference type="CTD" id="728489"/>
<dbReference type="ZFIN" id="ZDB-GENE-070112-1482">
    <property type="gene designation" value="dnlz"/>
</dbReference>
<dbReference type="eggNOG" id="KOG3277">
    <property type="taxonomic scope" value="Eukaryota"/>
</dbReference>
<dbReference type="InParanoid" id="A1L1P7"/>
<dbReference type="OrthoDB" id="512667at2759"/>
<dbReference type="PhylomeDB" id="A1L1P7"/>
<dbReference type="PRO" id="PR:A1L1P7"/>
<dbReference type="Proteomes" id="UP000000437">
    <property type="component" value="Chromosome 21"/>
</dbReference>
<dbReference type="GO" id="GO:0005739">
    <property type="term" value="C:mitochondrion"/>
    <property type="evidence" value="ECO:0000318"/>
    <property type="project" value="GO_Central"/>
</dbReference>
<dbReference type="GO" id="GO:0051087">
    <property type="term" value="F:protein-folding chaperone binding"/>
    <property type="evidence" value="ECO:0000318"/>
    <property type="project" value="GO_Central"/>
</dbReference>
<dbReference type="GO" id="GO:0008270">
    <property type="term" value="F:zinc ion binding"/>
    <property type="evidence" value="ECO:0007669"/>
    <property type="project" value="UniProtKB-KW"/>
</dbReference>
<dbReference type="GO" id="GO:0006457">
    <property type="term" value="P:protein folding"/>
    <property type="evidence" value="ECO:0000318"/>
    <property type="project" value="GO_Central"/>
</dbReference>
<dbReference type="GO" id="GO:0030150">
    <property type="term" value="P:protein import into mitochondrial matrix"/>
    <property type="evidence" value="ECO:0000318"/>
    <property type="project" value="GO_Central"/>
</dbReference>
<dbReference type="GO" id="GO:0050821">
    <property type="term" value="P:protein stabilization"/>
    <property type="evidence" value="ECO:0000318"/>
    <property type="project" value="GO_Central"/>
</dbReference>
<dbReference type="InterPro" id="IPR024158">
    <property type="entry name" value="Mt_import_TIM15"/>
</dbReference>
<dbReference type="InterPro" id="IPR007853">
    <property type="entry name" value="Znf_DNL-typ"/>
</dbReference>
<dbReference type="PANTHER" id="PTHR20922">
    <property type="entry name" value="DNL-TYPE ZINC FINGER PROTEIN"/>
    <property type="match status" value="1"/>
</dbReference>
<dbReference type="PANTHER" id="PTHR20922:SF13">
    <property type="entry name" value="DNL-TYPE ZINC FINGER PROTEIN"/>
    <property type="match status" value="1"/>
</dbReference>
<dbReference type="Pfam" id="PF05180">
    <property type="entry name" value="zf-DNL"/>
    <property type="match status" value="1"/>
</dbReference>
<dbReference type="PROSITE" id="PS51501">
    <property type="entry name" value="ZF_DNL"/>
    <property type="match status" value="1"/>
</dbReference>
<evidence type="ECO:0000250" key="1"/>
<evidence type="ECO:0000255" key="2"/>
<evidence type="ECO:0000255" key="3">
    <source>
        <dbReference type="PROSITE-ProRule" id="PRU00834"/>
    </source>
</evidence>
<evidence type="ECO:0000256" key="4">
    <source>
        <dbReference type="SAM" id="MobiDB-lite"/>
    </source>
</evidence>